<name>THND_TRIHA</name>
<keyword id="KW-0274">FAD</keyword>
<keyword id="KW-0285">Flavoprotein</keyword>
<keyword id="KW-0503">Monooxygenase</keyword>
<keyword id="KW-0560">Oxidoreductase</keyword>
<keyword id="KW-1185">Reference proteome</keyword>
<protein>
    <recommendedName>
        <fullName evidence="3">FAD-dependent monooxygenase thnD</fullName>
        <ecNumber evidence="5">1.-.-.-</ecNumber>
    </recommendedName>
    <alternativeName>
        <fullName evidence="3">Trihazone biosynthesis cluster protein D</fullName>
    </alternativeName>
</protein>
<reference key="1">
    <citation type="journal article" date="2015" name="Genome Announc.">
        <title>Draft whole-genome sequence of the biocontrol agent Trichoderma harzianum T6776.</title>
        <authorList>
            <person name="Baroncelli R."/>
            <person name="Piaggeschi G."/>
            <person name="Fiorini L."/>
            <person name="Bertolini E."/>
            <person name="Zapparata A."/>
            <person name="Pe M.E."/>
            <person name="Sarrocco S."/>
            <person name="Vannacci G."/>
        </authorList>
    </citation>
    <scope>NUCLEOTIDE SEQUENCE [LARGE SCALE GENOMIC DNA]</scope>
    <source>
        <strain>T6776</strain>
    </source>
</reference>
<reference key="2">
    <citation type="journal article" date="2021" name="Org. Biomol. Chem.">
        <title>Genome mining of cryptic tetronate natural products from a PKS-NRPS encoding gene cluster in Trichoderma harzianum t-22.</title>
        <authorList>
            <person name="Zhu Y."/>
            <person name="Wang J."/>
            <person name="Mou P."/>
            <person name="Yan Y."/>
            <person name="Chen M."/>
            <person name="Tang Y."/>
        </authorList>
    </citation>
    <scope>FUNCTION</scope>
</reference>
<feature type="chain" id="PRO_0000455679" description="FAD-dependent monooxygenase thnD">
    <location>
        <begin position="1"/>
        <end position="405"/>
    </location>
</feature>
<feature type="binding site" evidence="1">
    <location>
        <position position="30"/>
    </location>
    <ligand>
        <name>FAD</name>
        <dbReference type="ChEBI" id="CHEBI:57692"/>
    </ligand>
</feature>
<feature type="binding site" evidence="1">
    <location>
        <position position="45"/>
    </location>
    <ligand>
        <name>FAD</name>
        <dbReference type="ChEBI" id="CHEBI:57692"/>
    </ligand>
</feature>
<feature type="binding site" evidence="1">
    <location>
        <position position="106"/>
    </location>
    <ligand>
        <name>FAD</name>
        <dbReference type="ChEBI" id="CHEBI:57692"/>
    </ligand>
</feature>
<feature type="binding site" evidence="1">
    <location>
        <position position="308"/>
    </location>
    <ligand>
        <name>FAD</name>
        <dbReference type="ChEBI" id="CHEBI:57692"/>
    </ligand>
</feature>
<feature type="binding site" evidence="1">
    <location>
        <position position="321"/>
    </location>
    <ligand>
        <name>FAD</name>
        <dbReference type="ChEBI" id="CHEBI:57692"/>
    </ligand>
</feature>
<organism>
    <name type="scientific">Trichoderma harzianum</name>
    <name type="common">Hypocrea lixii</name>
    <dbReference type="NCBI Taxonomy" id="5544"/>
    <lineage>
        <taxon>Eukaryota</taxon>
        <taxon>Fungi</taxon>
        <taxon>Dikarya</taxon>
        <taxon>Ascomycota</taxon>
        <taxon>Pezizomycotina</taxon>
        <taxon>Sordariomycetes</taxon>
        <taxon>Hypocreomycetidae</taxon>
        <taxon>Hypocreales</taxon>
        <taxon>Hypocreaceae</taxon>
        <taxon>Trichoderma</taxon>
    </lineage>
</organism>
<proteinExistence type="inferred from homology"/>
<sequence length="405" mass="45550">MHVLIAGAGLGGLTLAQNLRKRGISYEIFERDEHKDARFQGWAIALHTITDELVASMPSDMPDLRQATDHMSPLKIPTQICLYPAESNVRVGWEDCPETPFIRAERYRLRNHLATNIPIQWGKRVQRIEHDDQGVAVYFEDGTGAKGDILVGADGVKSVVRQQLLQKSHDEVLKIIPLAAIVGELKLSGEAFKRQLQLSHGSYSLIDSEKGYLTFCSLHDVAPDGKSARYYWIMSRSDPTIADPDHWLHKATQQEKLDHAREVMSNREPKFREIFDLTPVEGVKKETHIWRDLELSSLPAGRVVLMGDAAHVMTPFRGEGGYNTFIDAMALAKILDRLDKEDKTHDIESIKNSVNEYNAEMLERGVKSVQLSREWVDGSKVNSKKPLLAPMKVIPFSEVPLEVAA</sequence>
<comment type="function">
    <text evidence="2">FAD-dependent monooxygenase; part of the gene cluster that produces the tetronate natural products trihazones (PubMed:33570538). Transcription analysis of thnD confirmed this gene is expressed, hence its role in the biosynthetic pathway remains cryptic (PubMed:33570538). The pathway begins with the formation of trihazone A by the hybrid PKS-NRPS synthetase thnA and the trans-enoyl reductase thnE. Trihazone A is further decarboxylated by the 2-oxoglutarate-dependent dioxygenase thnC to produce trihazone D. The function of the FAD-dependent monooxygenase thnD has still to be identified (PubMed:33570538).</text>
</comment>
<comment type="cofactor">
    <cofactor evidence="4">
        <name>FAD</name>
        <dbReference type="ChEBI" id="CHEBI:57692"/>
    </cofactor>
</comment>
<comment type="similarity">
    <text evidence="4">Belongs to the paxM FAD-dependent monooxygenase family.</text>
</comment>
<accession>A0A0F9XIF1</accession>
<gene>
    <name evidence="3" type="primary">thnD</name>
    <name type="ORF">THAR02_03176</name>
</gene>
<evidence type="ECO:0000250" key="1">
    <source>
        <dbReference type="UniProtKB" id="B8M9J8"/>
    </source>
</evidence>
<evidence type="ECO:0000269" key="2">
    <source>
    </source>
</evidence>
<evidence type="ECO:0000303" key="3">
    <source>
    </source>
</evidence>
<evidence type="ECO:0000305" key="4"/>
<evidence type="ECO:0000305" key="5">
    <source>
    </source>
</evidence>
<dbReference type="EC" id="1.-.-.-" evidence="5"/>
<dbReference type="EMBL" id="JOKZ01000069">
    <property type="protein sequence ID" value="KKP04696.1"/>
    <property type="molecule type" value="Genomic_DNA"/>
</dbReference>
<dbReference type="SMR" id="A0A0F9XIF1"/>
<dbReference type="OMA" id="RFQGWAI"/>
<dbReference type="OrthoDB" id="47494at2759"/>
<dbReference type="Proteomes" id="UP000034112">
    <property type="component" value="Unassembled WGS sequence"/>
</dbReference>
<dbReference type="GO" id="GO:0071949">
    <property type="term" value="F:FAD binding"/>
    <property type="evidence" value="ECO:0007669"/>
    <property type="project" value="InterPro"/>
</dbReference>
<dbReference type="GO" id="GO:0004497">
    <property type="term" value="F:monooxygenase activity"/>
    <property type="evidence" value="ECO:0007669"/>
    <property type="project" value="UniProtKB-KW"/>
</dbReference>
<dbReference type="Gene3D" id="3.50.50.60">
    <property type="entry name" value="FAD/NAD(P)-binding domain"/>
    <property type="match status" value="1"/>
</dbReference>
<dbReference type="InterPro" id="IPR002938">
    <property type="entry name" value="FAD-bd"/>
</dbReference>
<dbReference type="InterPro" id="IPR036188">
    <property type="entry name" value="FAD/NAD-bd_sf"/>
</dbReference>
<dbReference type="PANTHER" id="PTHR47178:SF6">
    <property type="entry name" value="FAD-BINDING DOMAIN-CONTAINING PROTEIN"/>
    <property type="match status" value="1"/>
</dbReference>
<dbReference type="PANTHER" id="PTHR47178">
    <property type="entry name" value="MONOOXYGENASE, FAD-BINDING"/>
    <property type="match status" value="1"/>
</dbReference>
<dbReference type="Pfam" id="PF01494">
    <property type="entry name" value="FAD_binding_3"/>
    <property type="match status" value="1"/>
</dbReference>
<dbReference type="PRINTS" id="PR00420">
    <property type="entry name" value="RNGMNOXGNASE"/>
</dbReference>
<dbReference type="SUPFAM" id="SSF51905">
    <property type="entry name" value="FAD/NAD(P)-binding domain"/>
    <property type="match status" value="1"/>
</dbReference>